<keyword id="KW-0002">3D-structure</keyword>
<keyword id="KW-0204">Cytolysis</keyword>
<keyword id="KW-0903">Direct protein sequencing</keyword>
<keyword id="KW-1015">Disulfide bond</keyword>
<keyword id="KW-0354">Hemolysis</keyword>
<keyword id="KW-0800">Toxin</keyword>
<keyword id="KW-0843">Virulence</keyword>
<sequence length="165" mass="18630">FELPSIPFPSPGSDEILFVVRDTTFNTKEPVNVKVSDFWTNRNVKRKPYEDVYGQSVFTTSGSKWLTSYMTVSINNKDYTMAAVSGYKDGFSSVFVKSGQIQLQHYYNSVADFVGGDENSIPSKTYLDETPSYFVNVEAYESGSGNILVMCISNKESYFECEEQQ</sequence>
<dbReference type="PIR" id="A43728">
    <property type="entry name" value="A43728"/>
</dbReference>
<dbReference type="PDB" id="4WX3">
    <property type="method" value="X-ray"/>
    <property type="resolution" value="1.70 A"/>
    <property type="chains" value="A/B/C/D=1-165"/>
</dbReference>
<dbReference type="PDB" id="4WX5">
    <property type="method" value="X-ray"/>
    <property type="resolution" value="2.30 A"/>
    <property type="chains" value="A/B/C/D=1-165"/>
</dbReference>
<dbReference type="PDBsum" id="4WX3"/>
<dbReference type="PDBsum" id="4WX5"/>
<dbReference type="SMR" id="P14711"/>
<dbReference type="GO" id="GO:0005576">
    <property type="term" value="C:extracellular region"/>
    <property type="evidence" value="ECO:0007669"/>
    <property type="project" value="InterPro"/>
</dbReference>
<dbReference type="GO" id="GO:0090729">
    <property type="term" value="F:toxin activity"/>
    <property type="evidence" value="ECO:0007669"/>
    <property type="project" value="UniProtKB-KW"/>
</dbReference>
<dbReference type="GO" id="GO:0019836">
    <property type="term" value="P:symbiont-mediated hemolysis of host erythrocyte"/>
    <property type="evidence" value="ECO:0007669"/>
    <property type="project" value="InterPro"/>
</dbReference>
<dbReference type="Gene3D" id="2.60.270.30">
    <property type="entry name" value="Vibrio parahaemolyticus thermostable direct hemolysin"/>
    <property type="match status" value="1"/>
</dbReference>
<dbReference type="InterPro" id="IPR038689">
    <property type="entry name" value="TDH_sf"/>
</dbReference>
<dbReference type="InterPro" id="IPR005015">
    <property type="entry name" value="Thermostable_hemolysn_vibrio"/>
</dbReference>
<dbReference type="Pfam" id="PF03347">
    <property type="entry name" value="TDH"/>
    <property type="match status" value="1"/>
</dbReference>
<comment type="function">
    <text>Bacterial hemolysins are exotoxins that attack blood cell membranes and cause cell rupture by mechanisms not clearly defined.</text>
</comment>
<comment type="subunit">
    <text>Homodimer.</text>
</comment>
<comment type="similarity">
    <text evidence="1">Belongs to the TDH hemolysin family.</text>
</comment>
<protein>
    <recommendedName>
        <fullName>Hemolysin, heat labile</fullName>
    </recommendedName>
</protein>
<evidence type="ECO:0000305" key="1"/>
<evidence type="ECO:0007829" key="2">
    <source>
        <dbReference type="PDB" id="4WX3"/>
    </source>
</evidence>
<evidence type="ECO:0007829" key="3">
    <source>
        <dbReference type="PDB" id="4WX5"/>
    </source>
</evidence>
<accession>P14711</accession>
<name>HLYT_GRIHO</name>
<organism>
    <name type="scientific">Grimontia hollisae</name>
    <name type="common">Vibrio hollisae</name>
    <dbReference type="NCBI Taxonomy" id="673"/>
    <lineage>
        <taxon>Bacteria</taxon>
        <taxon>Pseudomonadati</taxon>
        <taxon>Pseudomonadota</taxon>
        <taxon>Gammaproteobacteria</taxon>
        <taxon>Vibrionales</taxon>
        <taxon>Vibrionaceae</taxon>
        <taxon>Grimontia</taxon>
    </lineage>
</organism>
<reference key="1">
    <citation type="journal article" date="1989" name="J. Bacteriol.">
        <title>Comparative amino acid sequence analysis of hemolysins produced by Vibrio hollisae and Vibrio parahaemolyticus.</title>
        <authorList>
            <person name="Yoh M."/>
            <person name="Honda T."/>
            <person name="Miwatani T."/>
            <person name="Tsunasawa S."/>
            <person name="Sakiyama F."/>
        </authorList>
    </citation>
    <scope>PROTEIN SEQUENCE</scope>
    <source>
        <strain>RIMD 2221001</strain>
    </source>
</reference>
<feature type="chain" id="PRO_0000196247" description="Hemolysin, heat labile">
    <location>
        <begin position="1"/>
        <end position="165"/>
    </location>
</feature>
<feature type="disulfide bond">
    <location>
        <begin position="151"/>
        <end position="161"/>
    </location>
</feature>
<feature type="strand" evidence="2">
    <location>
        <begin position="13"/>
        <end position="22"/>
    </location>
</feature>
<feature type="turn" evidence="3">
    <location>
        <begin position="23"/>
        <end position="26"/>
    </location>
</feature>
<feature type="strand" evidence="2">
    <location>
        <begin position="27"/>
        <end position="29"/>
    </location>
</feature>
<feature type="strand" evidence="2">
    <location>
        <begin position="33"/>
        <end position="46"/>
    </location>
</feature>
<feature type="strand" evidence="2">
    <location>
        <begin position="53"/>
        <end position="74"/>
    </location>
</feature>
<feature type="strand" evidence="2">
    <location>
        <begin position="77"/>
        <end position="88"/>
    </location>
</feature>
<feature type="strand" evidence="2">
    <location>
        <begin position="91"/>
        <end position="100"/>
    </location>
</feature>
<feature type="helix" evidence="2">
    <location>
        <begin position="107"/>
        <end position="114"/>
    </location>
</feature>
<feature type="helix" evidence="2">
    <location>
        <begin position="118"/>
        <end position="120"/>
    </location>
</feature>
<feature type="strand" evidence="2">
    <location>
        <begin position="121"/>
        <end position="129"/>
    </location>
</feature>
<feature type="strand" evidence="2">
    <location>
        <begin position="134"/>
        <end position="142"/>
    </location>
</feature>
<feature type="strand" evidence="2">
    <location>
        <begin position="145"/>
        <end position="153"/>
    </location>
</feature>
<feature type="turn" evidence="2">
    <location>
        <begin position="155"/>
        <end position="157"/>
    </location>
</feature>
<feature type="helix" evidence="2">
    <location>
        <begin position="158"/>
        <end position="161"/>
    </location>
</feature>
<proteinExistence type="evidence at protein level"/>